<feature type="chain" id="PRO_1000051730" description="Nucleotide-binding protein CGSHiEE_06890">
    <location>
        <begin position="1"/>
        <end position="163"/>
    </location>
</feature>
<keyword id="KW-0547">Nucleotide-binding</keyword>
<evidence type="ECO:0000255" key="1">
    <source>
        <dbReference type="HAMAP-Rule" id="MF_00632"/>
    </source>
</evidence>
<dbReference type="EMBL" id="CP000671">
    <property type="protein sequence ID" value="ABQ98713.1"/>
    <property type="molecule type" value="Genomic_DNA"/>
</dbReference>
<dbReference type="SMR" id="A5UD62"/>
<dbReference type="KEGG" id="hip:CGSHiEE_06890"/>
<dbReference type="HOGENOM" id="CLU_099839_1_0_6"/>
<dbReference type="GO" id="GO:0005829">
    <property type="term" value="C:cytosol"/>
    <property type="evidence" value="ECO:0007669"/>
    <property type="project" value="TreeGrafter"/>
</dbReference>
<dbReference type="GO" id="GO:0000166">
    <property type="term" value="F:nucleotide binding"/>
    <property type="evidence" value="ECO:0007669"/>
    <property type="project" value="TreeGrafter"/>
</dbReference>
<dbReference type="CDD" id="cd11740">
    <property type="entry name" value="YajQ_like"/>
    <property type="match status" value="1"/>
</dbReference>
<dbReference type="FunFam" id="3.30.70.860:FF:000001">
    <property type="entry name" value="UPF0234 protein YajQ"/>
    <property type="match status" value="1"/>
</dbReference>
<dbReference type="FunFam" id="3.30.70.990:FF:000001">
    <property type="entry name" value="UPF0234 protein YajQ"/>
    <property type="match status" value="1"/>
</dbReference>
<dbReference type="Gene3D" id="3.30.70.860">
    <property type="match status" value="1"/>
</dbReference>
<dbReference type="Gene3D" id="3.30.70.990">
    <property type="entry name" value="YajQ-like, domain 2"/>
    <property type="match status" value="1"/>
</dbReference>
<dbReference type="HAMAP" id="MF_00632">
    <property type="entry name" value="YajQ"/>
    <property type="match status" value="1"/>
</dbReference>
<dbReference type="InterPro" id="IPR007551">
    <property type="entry name" value="DUF520"/>
</dbReference>
<dbReference type="InterPro" id="IPR035571">
    <property type="entry name" value="UPF0234-like_C"/>
</dbReference>
<dbReference type="InterPro" id="IPR035570">
    <property type="entry name" value="UPF0234_N"/>
</dbReference>
<dbReference type="InterPro" id="IPR036183">
    <property type="entry name" value="YajQ-like_sf"/>
</dbReference>
<dbReference type="NCBIfam" id="NF003819">
    <property type="entry name" value="PRK05412.1"/>
    <property type="match status" value="1"/>
</dbReference>
<dbReference type="PANTHER" id="PTHR30476">
    <property type="entry name" value="UPF0234 PROTEIN YAJQ"/>
    <property type="match status" value="1"/>
</dbReference>
<dbReference type="PANTHER" id="PTHR30476:SF0">
    <property type="entry name" value="UPF0234 PROTEIN YAJQ"/>
    <property type="match status" value="1"/>
</dbReference>
<dbReference type="Pfam" id="PF04461">
    <property type="entry name" value="DUF520"/>
    <property type="match status" value="1"/>
</dbReference>
<dbReference type="SUPFAM" id="SSF89963">
    <property type="entry name" value="YajQ-like"/>
    <property type="match status" value="2"/>
</dbReference>
<name>Y6890_HAEIE</name>
<proteinExistence type="inferred from homology"/>
<protein>
    <recommendedName>
        <fullName evidence="1">Nucleotide-binding protein CGSHiEE_06890</fullName>
    </recommendedName>
</protein>
<comment type="function">
    <text evidence="1">Nucleotide-binding protein.</text>
</comment>
<comment type="similarity">
    <text evidence="1">Belongs to the YajQ family.</text>
</comment>
<reference key="1">
    <citation type="journal article" date="2007" name="Genome Biol.">
        <title>Characterization and modeling of the Haemophilus influenzae core and supragenomes based on the complete genomic sequences of Rd and 12 clinical nontypeable strains.</title>
        <authorList>
            <person name="Hogg J.S."/>
            <person name="Hu F.Z."/>
            <person name="Janto B."/>
            <person name="Boissy R."/>
            <person name="Hayes J."/>
            <person name="Keefe R."/>
            <person name="Post J.C."/>
            <person name="Ehrlich G.D."/>
        </authorList>
    </citation>
    <scope>NUCLEOTIDE SEQUENCE [LARGE SCALE GENOMIC DNA]</scope>
    <source>
        <strain>PittEE</strain>
    </source>
</reference>
<sequence length="163" mass="18551">MPSFDIVSEITLHEVRNAVENANRVLSTRYDFRGVEAVIELNEKNETIKITTESDFQLEQLIEILIGSCIKRGIEHSSLDIPAESEHHGKLYSKEIKLKQGIETEMAKKITKLVKDSKIKVQTQIQGEQVRVTGKSRDDLQAVIQLVKSAELGQPFQFNNFRD</sequence>
<gene>
    <name type="ordered locus">CGSHiEE_06890</name>
</gene>
<accession>A5UD62</accession>
<organism>
    <name type="scientific">Haemophilus influenzae (strain PittEE)</name>
    <dbReference type="NCBI Taxonomy" id="374930"/>
    <lineage>
        <taxon>Bacteria</taxon>
        <taxon>Pseudomonadati</taxon>
        <taxon>Pseudomonadota</taxon>
        <taxon>Gammaproteobacteria</taxon>
        <taxon>Pasteurellales</taxon>
        <taxon>Pasteurellaceae</taxon>
        <taxon>Haemophilus</taxon>
    </lineage>
</organism>